<proteinExistence type="inferred from homology"/>
<keyword id="KW-0004">4Fe-4S</keyword>
<keyword id="KW-0963">Cytoplasm</keyword>
<keyword id="KW-0408">Iron</keyword>
<keyword id="KW-0411">Iron-sulfur</keyword>
<keyword id="KW-0479">Metal-binding</keyword>
<keyword id="KW-0662">Pyridine nucleotide biosynthesis</keyword>
<keyword id="KW-0808">Transferase</keyword>
<reference key="1">
    <citation type="journal article" date="2008" name="J. Bacteriol.">
        <title>The complete genome sequence of Escherichia coli DH10B: insights into the biology of a laboratory workhorse.</title>
        <authorList>
            <person name="Durfee T."/>
            <person name="Nelson R."/>
            <person name="Baldwin S."/>
            <person name="Plunkett G. III"/>
            <person name="Burland V."/>
            <person name="Mau B."/>
            <person name="Petrosino J.F."/>
            <person name="Qin X."/>
            <person name="Muzny D.M."/>
            <person name="Ayele M."/>
            <person name="Gibbs R.A."/>
            <person name="Csorgo B."/>
            <person name="Posfai G."/>
            <person name="Weinstock G.M."/>
            <person name="Blattner F.R."/>
        </authorList>
    </citation>
    <scope>NUCLEOTIDE SEQUENCE [LARGE SCALE GENOMIC DNA]</scope>
    <source>
        <strain>K12 / DH10B</strain>
    </source>
</reference>
<dbReference type="EC" id="2.5.1.72" evidence="1"/>
<dbReference type="EMBL" id="CP000948">
    <property type="protein sequence ID" value="ACB01952.1"/>
    <property type="molecule type" value="Genomic_DNA"/>
</dbReference>
<dbReference type="RefSeq" id="WP_000115290.1">
    <property type="nucleotide sequence ID" value="NC_010473.1"/>
</dbReference>
<dbReference type="SMR" id="B1X6S4"/>
<dbReference type="KEGG" id="ecd:ECDH10B_0817"/>
<dbReference type="HOGENOM" id="CLU_047382_1_0_6"/>
<dbReference type="UniPathway" id="UPA00253">
    <property type="reaction ID" value="UER00327"/>
</dbReference>
<dbReference type="GO" id="GO:0005829">
    <property type="term" value="C:cytosol"/>
    <property type="evidence" value="ECO:0007669"/>
    <property type="project" value="TreeGrafter"/>
</dbReference>
<dbReference type="GO" id="GO:0051539">
    <property type="term" value="F:4 iron, 4 sulfur cluster binding"/>
    <property type="evidence" value="ECO:0007669"/>
    <property type="project" value="UniProtKB-KW"/>
</dbReference>
<dbReference type="GO" id="GO:0046872">
    <property type="term" value="F:metal ion binding"/>
    <property type="evidence" value="ECO:0007669"/>
    <property type="project" value="UniProtKB-KW"/>
</dbReference>
<dbReference type="GO" id="GO:0008987">
    <property type="term" value="F:quinolinate synthetase A activity"/>
    <property type="evidence" value="ECO:0007669"/>
    <property type="project" value="UniProtKB-UniRule"/>
</dbReference>
<dbReference type="GO" id="GO:0034628">
    <property type="term" value="P:'de novo' NAD biosynthetic process from L-aspartate"/>
    <property type="evidence" value="ECO:0007669"/>
    <property type="project" value="TreeGrafter"/>
</dbReference>
<dbReference type="FunFam" id="3.40.50.10800:FF:000001">
    <property type="entry name" value="Quinolinate synthase A"/>
    <property type="match status" value="1"/>
</dbReference>
<dbReference type="FunFam" id="3.40.50.10800:FF:000003">
    <property type="entry name" value="Quinolinate synthase A"/>
    <property type="match status" value="1"/>
</dbReference>
<dbReference type="Gene3D" id="3.40.50.10800">
    <property type="entry name" value="NadA-like"/>
    <property type="match status" value="3"/>
</dbReference>
<dbReference type="HAMAP" id="MF_00567">
    <property type="entry name" value="NadA_type1"/>
    <property type="match status" value="1"/>
</dbReference>
<dbReference type="InterPro" id="IPR003473">
    <property type="entry name" value="NadA"/>
</dbReference>
<dbReference type="InterPro" id="IPR036094">
    <property type="entry name" value="NadA_sf"/>
</dbReference>
<dbReference type="InterPro" id="IPR023513">
    <property type="entry name" value="Quinolinate_synth_A_type1"/>
</dbReference>
<dbReference type="NCBIfam" id="TIGR00550">
    <property type="entry name" value="nadA"/>
    <property type="match status" value="1"/>
</dbReference>
<dbReference type="NCBIfam" id="NF006877">
    <property type="entry name" value="PRK09375.1-1"/>
    <property type="match status" value="1"/>
</dbReference>
<dbReference type="NCBIfam" id="NF006878">
    <property type="entry name" value="PRK09375.1-2"/>
    <property type="match status" value="1"/>
</dbReference>
<dbReference type="PANTHER" id="PTHR30573:SF0">
    <property type="entry name" value="QUINOLINATE SYNTHASE, CHLOROPLASTIC"/>
    <property type="match status" value="1"/>
</dbReference>
<dbReference type="PANTHER" id="PTHR30573">
    <property type="entry name" value="QUINOLINATE SYNTHETASE A"/>
    <property type="match status" value="1"/>
</dbReference>
<dbReference type="Pfam" id="PF02445">
    <property type="entry name" value="NadA"/>
    <property type="match status" value="1"/>
</dbReference>
<dbReference type="SUPFAM" id="SSF142754">
    <property type="entry name" value="NadA-like"/>
    <property type="match status" value="1"/>
</dbReference>
<evidence type="ECO:0000255" key="1">
    <source>
        <dbReference type="HAMAP-Rule" id="MF_00567"/>
    </source>
</evidence>
<feature type="chain" id="PRO_1000129413" description="Quinolinate synthase">
    <location>
        <begin position="1"/>
        <end position="347"/>
    </location>
</feature>
<feature type="binding site" evidence="1">
    <location>
        <position position="47"/>
    </location>
    <ligand>
        <name>iminosuccinate</name>
        <dbReference type="ChEBI" id="CHEBI:77875"/>
    </ligand>
</feature>
<feature type="binding site" evidence="1">
    <location>
        <position position="68"/>
    </location>
    <ligand>
        <name>iminosuccinate</name>
        <dbReference type="ChEBI" id="CHEBI:77875"/>
    </ligand>
</feature>
<feature type="binding site" evidence="1">
    <location>
        <position position="113"/>
    </location>
    <ligand>
        <name>[4Fe-4S] cluster</name>
        <dbReference type="ChEBI" id="CHEBI:49883"/>
    </ligand>
</feature>
<feature type="binding site" evidence="1">
    <location>
        <begin position="139"/>
        <end position="141"/>
    </location>
    <ligand>
        <name>iminosuccinate</name>
        <dbReference type="ChEBI" id="CHEBI:77875"/>
    </ligand>
</feature>
<feature type="binding site" evidence="1">
    <location>
        <position position="156"/>
    </location>
    <ligand>
        <name>iminosuccinate</name>
        <dbReference type="ChEBI" id="CHEBI:77875"/>
    </ligand>
</feature>
<feature type="binding site" evidence="1">
    <location>
        <position position="200"/>
    </location>
    <ligand>
        <name>[4Fe-4S] cluster</name>
        <dbReference type="ChEBI" id="CHEBI:49883"/>
    </ligand>
</feature>
<feature type="binding site" evidence="1">
    <location>
        <begin position="226"/>
        <end position="228"/>
    </location>
    <ligand>
        <name>iminosuccinate</name>
        <dbReference type="ChEBI" id="CHEBI:77875"/>
    </ligand>
</feature>
<feature type="binding site" evidence="1">
    <location>
        <position position="243"/>
    </location>
    <ligand>
        <name>iminosuccinate</name>
        <dbReference type="ChEBI" id="CHEBI:77875"/>
    </ligand>
</feature>
<feature type="binding site" evidence="1">
    <location>
        <position position="297"/>
    </location>
    <ligand>
        <name>[4Fe-4S] cluster</name>
        <dbReference type="ChEBI" id="CHEBI:49883"/>
    </ligand>
</feature>
<protein>
    <recommendedName>
        <fullName evidence="1">Quinolinate synthase</fullName>
        <ecNumber evidence="1">2.5.1.72</ecNumber>
    </recommendedName>
</protein>
<organism>
    <name type="scientific">Escherichia coli (strain K12 / DH10B)</name>
    <dbReference type="NCBI Taxonomy" id="316385"/>
    <lineage>
        <taxon>Bacteria</taxon>
        <taxon>Pseudomonadati</taxon>
        <taxon>Pseudomonadota</taxon>
        <taxon>Gammaproteobacteria</taxon>
        <taxon>Enterobacterales</taxon>
        <taxon>Enterobacteriaceae</taxon>
        <taxon>Escherichia</taxon>
    </lineage>
</organism>
<gene>
    <name evidence="1" type="primary">nadA</name>
    <name type="ordered locus">ECDH10B_0817</name>
</gene>
<sequence length="347" mass="38241">MSVMFDPDTAIYPFPPKPTPLSIDEKAYYREKIKRLLKERNAVMVAHYYTDPEIQQLAEETGGCISDSLEMARFGAKHPASTLLVAGVRFMGETAKILSPEKTILMPTLQAECSLDLGCPVEEFNAFCDAHPDRTVVVYANTSAAVKARADWVVTSSIAVELIDHLDSLGEKIIWAPDKHLGRYVQKQTGGDILCWQGACIVHDEFKTQALTRLQEEYPDAAILVHPESPQAIVDMADAVGSTSQLIAAAKTLPHQRLIVATDRGIFYKMQQAVPDKELLEAPTAGEGATCRSCAHCPWMAMNGLQAIAEALEQEGSNHEVHVDERLRERALVPLNRMLDFAATLRG</sequence>
<comment type="function">
    <text evidence="1">Catalyzes the condensation of iminoaspartate with dihydroxyacetone phosphate to form quinolinate.</text>
</comment>
<comment type="catalytic activity">
    <reaction evidence="1">
        <text>iminosuccinate + dihydroxyacetone phosphate = quinolinate + phosphate + 2 H2O + H(+)</text>
        <dbReference type="Rhea" id="RHEA:25888"/>
        <dbReference type="ChEBI" id="CHEBI:15377"/>
        <dbReference type="ChEBI" id="CHEBI:15378"/>
        <dbReference type="ChEBI" id="CHEBI:29959"/>
        <dbReference type="ChEBI" id="CHEBI:43474"/>
        <dbReference type="ChEBI" id="CHEBI:57642"/>
        <dbReference type="ChEBI" id="CHEBI:77875"/>
        <dbReference type="EC" id="2.5.1.72"/>
    </reaction>
    <physiologicalReaction direction="left-to-right" evidence="1">
        <dbReference type="Rhea" id="RHEA:25889"/>
    </physiologicalReaction>
</comment>
<comment type="cofactor">
    <cofactor evidence="1">
        <name>[4Fe-4S] cluster</name>
        <dbReference type="ChEBI" id="CHEBI:49883"/>
    </cofactor>
    <text evidence="1">Binds 1 [4Fe-4S] cluster per subunit.</text>
</comment>
<comment type="pathway">
    <text evidence="1">Cofactor biosynthesis; NAD(+) biosynthesis; quinolinate from iminoaspartate: step 1/1.</text>
</comment>
<comment type="subcellular location">
    <subcellularLocation>
        <location evidence="1">Cytoplasm</location>
    </subcellularLocation>
</comment>
<comment type="similarity">
    <text evidence="1">Belongs to the quinolinate synthase family. Type 1 subfamily.</text>
</comment>
<accession>B1X6S4</accession>
<name>NADA_ECODH</name>